<gene>
    <name evidence="1" type="primary">groEL1</name>
    <name evidence="1" type="synonym">groL1</name>
    <name type="ordered locus">RD1_0772</name>
</gene>
<organism>
    <name type="scientific">Roseobacter denitrificans (strain ATCC 33942 / OCh 114)</name>
    <name type="common">Erythrobacter sp. (strain OCh 114)</name>
    <name type="synonym">Roseobacter denitrificans</name>
    <dbReference type="NCBI Taxonomy" id="375451"/>
    <lineage>
        <taxon>Bacteria</taxon>
        <taxon>Pseudomonadati</taxon>
        <taxon>Pseudomonadota</taxon>
        <taxon>Alphaproteobacteria</taxon>
        <taxon>Rhodobacterales</taxon>
        <taxon>Roseobacteraceae</taxon>
        <taxon>Roseobacter</taxon>
    </lineage>
</organism>
<reference key="1">
    <citation type="journal article" date="2007" name="J. Bacteriol.">
        <title>The complete genome sequence of Roseobacter denitrificans reveals a mixotrophic rather than photosynthetic metabolism.</title>
        <authorList>
            <person name="Swingley W.D."/>
            <person name="Sadekar S."/>
            <person name="Mastrian S.D."/>
            <person name="Matthies H.J."/>
            <person name="Hao J."/>
            <person name="Ramos H."/>
            <person name="Acharya C.R."/>
            <person name="Conrad A.L."/>
            <person name="Taylor H.L."/>
            <person name="Dejesa L.C."/>
            <person name="Shah M.K."/>
            <person name="O'Huallachain M.E."/>
            <person name="Lince M.T."/>
            <person name="Blankenship R.E."/>
            <person name="Beatty J.T."/>
            <person name="Touchman J.W."/>
        </authorList>
    </citation>
    <scope>NUCLEOTIDE SEQUENCE [LARGE SCALE GENOMIC DNA]</scope>
    <source>
        <strain>ATCC 33942 / OCh 114</strain>
    </source>
</reference>
<name>CH601_ROSDO</name>
<keyword id="KW-0067">ATP-binding</keyword>
<keyword id="KW-0143">Chaperone</keyword>
<keyword id="KW-0963">Cytoplasm</keyword>
<keyword id="KW-0413">Isomerase</keyword>
<keyword id="KW-0547">Nucleotide-binding</keyword>
<keyword id="KW-1185">Reference proteome</keyword>
<feature type="chain" id="PRO_0000256978" description="Chaperonin GroEL 1">
    <location>
        <begin position="1"/>
        <end position="543"/>
    </location>
</feature>
<feature type="binding site" evidence="1">
    <location>
        <begin position="30"/>
        <end position="33"/>
    </location>
    <ligand>
        <name>ATP</name>
        <dbReference type="ChEBI" id="CHEBI:30616"/>
    </ligand>
</feature>
<feature type="binding site" evidence="1">
    <location>
        <position position="51"/>
    </location>
    <ligand>
        <name>ATP</name>
        <dbReference type="ChEBI" id="CHEBI:30616"/>
    </ligand>
</feature>
<feature type="binding site" evidence="1">
    <location>
        <begin position="87"/>
        <end position="91"/>
    </location>
    <ligand>
        <name>ATP</name>
        <dbReference type="ChEBI" id="CHEBI:30616"/>
    </ligand>
</feature>
<feature type="binding site" evidence="1">
    <location>
        <position position="415"/>
    </location>
    <ligand>
        <name>ATP</name>
        <dbReference type="ChEBI" id="CHEBI:30616"/>
    </ligand>
</feature>
<feature type="binding site" evidence="1">
    <location>
        <position position="496"/>
    </location>
    <ligand>
        <name>ATP</name>
        <dbReference type="ChEBI" id="CHEBI:30616"/>
    </ligand>
</feature>
<sequence>MSAKDVKFDTAARSRMLRGVNTLADAVKVTLGPKGRNVVIDKSFGAPRITKDGVTVAKEIELEDKFENMGAQMVKEVASRTNDQAGDGTTTSTVLAQAIVNEGMKAVAAGMNPMDLKRGIDLATSKVVEAIKAAARDVKDSDEVAQVGTISANGEAEIGRQIADAMQKVGNDGVITVEENKGLETETEVVEGMQFDRGYLSPYFVTNPDKMTAELEDPFILIHEKKLSSLQPLVPLLESIIQAGKPLLVIAEDVEGEALATLVVNKLRGGLKIAAVKAPGFGDRRKAMLQDIAILTGGQVISEDLGMKLESVTIDMLGTAKKVAITKDETTVVNGAGEKAEIDARVSQIRTQIEETTSDYDREKLQERVAKLAGGVAVIRVGGMTEVEVKERKDRVDDALNATRAAVQEGIVVGGGVALVQGAKALDGLQGANPDQNAGIAIVRRALEAPLRQIAENAGVDGSVVAGKIRESDDATFGFNAQTEEYGDLFSFGVIDPAKVVRTALEDASSVAGLLITTEAMVAVKPAGKGAASPAMPDMGGMM</sequence>
<protein>
    <recommendedName>
        <fullName evidence="1">Chaperonin GroEL 1</fullName>
        <ecNumber evidence="1">5.6.1.7</ecNumber>
    </recommendedName>
    <alternativeName>
        <fullName evidence="1">60 kDa chaperonin 1</fullName>
    </alternativeName>
    <alternativeName>
        <fullName evidence="1">Chaperonin-60 1</fullName>
        <shortName evidence="1">Cpn60 1</shortName>
    </alternativeName>
</protein>
<accession>Q16C40</accession>
<dbReference type="EC" id="5.6.1.7" evidence="1"/>
<dbReference type="EMBL" id="CP000362">
    <property type="protein sequence ID" value="ABG30453.1"/>
    <property type="molecule type" value="Genomic_DNA"/>
</dbReference>
<dbReference type="RefSeq" id="WP_011567075.1">
    <property type="nucleotide sequence ID" value="NC_008209.1"/>
</dbReference>
<dbReference type="SMR" id="Q16C40"/>
<dbReference type="STRING" id="375451.RD1_0772"/>
<dbReference type="KEGG" id="rde:RD1_0772"/>
<dbReference type="eggNOG" id="COG0459">
    <property type="taxonomic scope" value="Bacteria"/>
</dbReference>
<dbReference type="HOGENOM" id="CLU_016503_3_0_5"/>
<dbReference type="OrthoDB" id="9766614at2"/>
<dbReference type="Proteomes" id="UP000007029">
    <property type="component" value="Chromosome"/>
</dbReference>
<dbReference type="GO" id="GO:0005737">
    <property type="term" value="C:cytoplasm"/>
    <property type="evidence" value="ECO:0007669"/>
    <property type="project" value="UniProtKB-SubCell"/>
</dbReference>
<dbReference type="GO" id="GO:0005524">
    <property type="term" value="F:ATP binding"/>
    <property type="evidence" value="ECO:0007669"/>
    <property type="project" value="UniProtKB-UniRule"/>
</dbReference>
<dbReference type="GO" id="GO:0140662">
    <property type="term" value="F:ATP-dependent protein folding chaperone"/>
    <property type="evidence" value="ECO:0007669"/>
    <property type="project" value="InterPro"/>
</dbReference>
<dbReference type="GO" id="GO:0016853">
    <property type="term" value="F:isomerase activity"/>
    <property type="evidence" value="ECO:0007669"/>
    <property type="project" value="UniProtKB-KW"/>
</dbReference>
<dbReference type="GO" id="GO:0051082">
    <property type="term" value="F:unfolded protein binding"/>
    <property type="evidence" value="ECO:0007669"/>
    <property type="project" value="UniProtKB-UniRule"/>
</dbReference>
<dbReference type="GO" id="GO:0042026">
    <property type="term" value="P:protein refolding"/>
    <property type="evidence" value="ECO:0007669"/>
    <property type="project" value="UniProtKB-UniRule"/>
</dbReference>
<dbReference type="CDD" id="cd03344">
    <property type="entry name" value="GroEL"/>
    <property type="match status" value="1"/>
</dbReference>
<dbReference type="FunFam" id="1.10.560.10:FF:000001">
    <property type="entry name" value="60 kDa chaperonin"/>
    <property type="match status" value="1"/>
</dbReference>
<dbReference type="FunFam" id="3.50.7.10:FF:000001">
    <property type="entry name" value="60 kDa chaperonin"/>
    <property type="match status" value="1"/>
</dbReference>
<dbReference type="Gene3D" id="3.50.7.10">
    <property type="entry name" value="GroEL"/>
    <property type="match status" value="1"/>
</dbReference>
<dbReference type="Gene3D" id="1.10.560.10">
    <property type="entry name" value="GroEL-like equatorial domain"/>
    <property type="match status" value="1"/>
</dbReference>
<dbReference type="Gene3D" id="3.30.260.10">
    <property type="entry name" value="TCP-1-like chaperonin intermediate domain"/>
    <property type="match status" value="1"/>
</dbReference>
<dbReference type="HAMAP" id="MF_00600">
    <property type="entry name" value="CH60"/>
    <property type="match status" value="1"/>
</dbReference>
<dbReference type="InterPro" id="IPR018370">
    <property type="entry name" value="Chaperonin_Cpn60_CS"/>
</dbReference>
<dbReference type="InterPro" id="IPR001844">
    <property type="entry name" value="Cpn60/GroEL"/>
</dbReference>
<dbReference type="InterPro" id="IPR002423">
    <property type="entry name" value="Cpn60/GroEL/TCP-1"/>
</dbReference>
<dbReference type="InterPro" id="IPR027409">
    <property type="entry name" value="GroEL-like_apical_dom_sf"/>
</dbReference>
<dbReference type="InterPro" id="IPR027413">
    <property type="entry name" value="GROEL-like_equatorial_sf"/>
</dbReference>
<dbReference type="InterPro" id="IPR027410">
    <property type="entry name" value="TCP-1-like_intermed_sf"/>
</dbReference>
<dbReference type="NCBIfam" id="TIGR02348">
    <property type="entry name" value="GroEL"/>
    <property type="match status" value="1"/>
</dbReference>
<dbReference type="NCBIfam" id="NF000592">
    <property type="entry name" value="PRK00013.1"/>
    <property type="match status" value="1"/>
</dbReference>
<dbReference type="NCBIfam" id="NF009487">
    <property type="entry name" value="PRK12849.1"/>
    <property type="match status" value="1"/>
</dbReference>
<dbReference type="NCBIfam" id="NF009488">
    <property type="entry name" value="PRK12850.1"/>
    <property type="match status" value="1"/>
</dbReference>
<dbReference type="NCBIfam" id="NF009489">
    <property type="entry name" value="PRK12851.1"/>
    <property type="match status" value="1"/>
</dbReference>
<dbReference type="PANTHER" id="PTHR45633">
    <property type="entry name" value="60 KDA HEAT SHOCK PROTEIN, MITOCHONDRIAL"/>
    <property type="match status" value="1"/>
</dbReference>
<dbReference type="Pfam" id="PF00118">
    <property type="entry name" value="Cpn60_TCP1"/>
    <property type="match status" value="1"/>
</dbReference>
<dbReference type="PRINTS" id="PR00298">
    <property type="entry name" value="CHAPERONIN60"/>
</dbReference>
<dbReference type="SUPFAM" id="SSF52029">
    <property type="entry name" value="GroEL apical domain-like"/>
    <property type="match status" value="1"/>
</dbReference>
<dbReference type="SUPFAM" id="SSF48592">
    <property type="entry name" value="GroEL equatorial domain-like"/>
    <property type="match status" value="1"/>
</dbReference>
<dbReference type="SUPFAM" id="SSF54849">
    <property type="entry name" value="GroEL-intermediate domain like"/>
    <property type="match status" value="1"/>
</dbReference>
<dbReference type="PROSITE" id="PS00296">
    <property type="entry name" value="CHAPERONINS_CPN60"/>
    <property type="match status" value="1"/>
</dbReference>
<proteinExistence type="inferred from homology"/>
<evidence type="ECO:0000255" key="1">
    <source>
        <dbReference type="HAMAP-Rule" id="MF_00600"/>
    </source>
</evidence>
<comment type="function">
    <text evidence="1">Together with its co-chaperonin GroES, plays an essential role in assisting protein folding. The GroEL-GroES system forms a nano-cage that allows encapsulation of the non-native substrate proteins and provides a physical environment optimized to promote and accelerate protein folding.</text>
</comment>
<comment type="catalytic activity">
    <reaction evidence="1">
        <text>ATP + H2O + a folded polypeptide = ADP + phosphate + an unfolded polypeptide.</text>
        <dbReference type="EC" id="5.6.1.7"/>
    </reaction>
</comment>
<comment type="subunit">
    <text evidence="1">Forms a cylinder of 14 subunits composed of two heptameric rings stacked back-to-back. Interacts with the co-chaperonin GroES.</text>
</comment>
<comment type="subcellular location">
    <subcellularLocation>
        <location evidence="1">Cytoplasm</location>
    </subcellularLocation>
</comment>
<comment type="similarity">
    <text evidence="1">Belongs to the chaperonin (HSP60) family.</text>
</comment>